<protein>
    <recommendedName>
        <fullName evidence="1">Trigger factor</fullName>
        <shortName evidence="1">TF</shortName>
        <ecNumber evidence="1">5.2.1.8</ecNumber>
    </recommendedName>
    <alternativeName>
        <fullName evidence="1">PPIase</fullName>
    </alternativeName>
</protein>
<reference key="1">
    <citation type="journal article" date="2010" name="J. Bacteriol.">
        <title>Genome sequence of the deep-rooted Yersinia pestis strain Angola reveals new insights into the evolution and pangenome of the plague bacterium.</title>
        <authorList>
            <person name="Eppinger M."/>
            <person name="Worsham P.L."/>
            <person name="Nikolich M.P."/>
            <person name="Riley D.R."/>
            <person name="Sebastian Y."/>
            <person name="Mou S."/>
            <person name="Achtman M."/>
            <person name="Lindler L.E."/>
            <person name="Ravel J."/>
        </authorList>
    </citation>
    <scope>NUCLEOTIDE SEQUENCE [LARGE SCALE GENOMIC DNA]</scope>
    <source>
        <strain>Angola</strain>
    </source>
</reference>
<feature type="chain" id="PRO_1000115606" description="Trigger factor">
    <location>
        <begin position="1"/>
        <end position="434"/>
    </location>
</feature>
<feature type="domain" description="PPIase FKBP-type" evidence="1">
    <location>
        <begin position="161"/>
        <end position="246"/>
    </location>
</feature>
<dbReference type="EC" id="5.2.1.8" evidence="1"/>
<dbReference type="EMBL" id="CP000901">
    <property type="protein sequence ID" value="ABX87020.1"/>
    <property type="molecule type" value="Genomic_DNA"/>
</dbReference>
<dbReference type="RefSeq" id="WP_002208643.1">
    <property type="nucleotide sequence ID" value="NZ_CP009935.1"/>
</dbReference>
<dbReference type="SMR" id="A9QZQ4"/>
<dbReference type="GeneID" id="57975553"/>
<dbReference type="KEGG" id="ypg:YpAngola_A3055"/>
<dbReference type="PATRIC" id="fig|349746.12.peg.4110"/>
<dbReference type="GO" id="GO:0005737">
    <property type="term" value="C:cytoplasm"/>
    <property type="evidence" value="ECO:0007669"/>
    <property type="project" value="UniProtKB-SubCell"/>
</dbReference>
<dbReference type="GO" id="GO:0003755">
    <property type="term" value="F:peptidyl-prolyl cis-trans isomerase activity"/>
    <property type="evidence" value="ECO:0007669"/>
    <property type="project" value="UniProtKB-UniRule"/>
</dbReference>
<dbReference type="GO" id="GO:0044183">
    <property type="term" value="F:protein folding chaperone"/>
    <property type="evidence" value="ECO:0007669"/>
    <property type="project" value="TreeGrafter"/>
</dbReference>
<dbReference type="GO" id="GO:0043022">
    <property type="term" value="F:ribosome binding"/>
    <property type="evidence" value="ECO:0007669"/>
    <property type="project" value="TreeGrafter"/>
</dbReference>
<dbReference type="GO" id="GO:0051083">
    <property type="term" value="P:'de novo' cotranslational protein folding"/>
    <property type="evidence" value="ECO:0007669"/>
    <property type="project" value="TreeGrafter"/>
</dbReference>
<dbReference type="GO" id="GO:0051301">
    <property type="term" value="P:cell division"/>
    <property type="evidence" value="ECO:0007669"/>
    <property type="project" value="UniProtKB-KW"/>
</dbReference>
<dbReference type="GO" id="GO:0061077">
    <property type="term" value="P:chaperone-mediated protein folding"/>
    <property type="evidence" value="ECO:0007669"/>
    <property type="project" value="TreeGrafter"/>
</dbReference>
<dbReference type="GO" id="GO:0015031">
    <property type="term" value="P:protein transport"/>
    <property type="evidence" value="ECO:0007669"/>
    <property type="project" value="UniProtKB-UniRule"/>
</dbReference>
<dbReference type="GO" id="GO:0043335">
    <property type="term" value="P:protein unfolding"/>
    <property type="evidence" value="ECO:0007669"/>
    <property type="project" value="TreeGrafter"/>
</dbReference>
<dbReference type="FunFam" id="1.10.3120.10:FF:000001">
    <property type="entry name" value="Trigger factor"/>
    <property type="match status" value="1"/>
</dbReference>
<dbReference type="FunFam" id="3.10.50.40:FF:000001">
    <property type="entry name" value="Trigger factor"/>
    <property type="match status" value="1"/>
</dbReference>
<dbReference type="FunFam" id="3.30.70.1050:FF:000001">
    <property type="entry name" value="Trigger factor"/>
    <property type="match status" value="1"/>
</dbReference>
<dbReference type="Gene3D" id="3.10.50.40">
    <property type="match status" value="1"/>
</dbReference>
<dbReference type="Gene3D" id="3.30.70.1050">
    <property type="entry name" value="Trigger factor ribosome-binding domain"/>
    <property type="match status" value="1"/>
</dbReference>
<dbReference type="Gene3D" id="1.10.3120.10">
    <property type="entry name" value="Trigger factor, C-terminal domain"/>
    <property type="match status" value="1"/>
</dbReference>
<dbReference type="HAMAP" id="MF_00303">
    <property type="entry name" value="Trigger_factor_Tig"/>
    <property type="match status" value="1"/>
</dbReference>
<dbReference type="InterPro" id="IPR046357">
    <property type="entry name" value="PPIase_dom_sf"/>
</dbReference>
<dbReference type="InterPro" id="IPR001179">
    <property type="entry name" value="PPIase_FKBP_dom"/>
</dbReference>
<dbReference type="InterPro" id="IPR005215">
    <property type="entry name" value="Trig_fac"/>
</dbReference>
<dbReference type="InterPro" id="IPR008880">
    <property type="entry name" value="Trigger_fac_C"/>
</dbReference>
<dbReference type="InterPro" id="IPR037041">
    <property type="entry name" value="Trigger_fac_C_sf"/>
</dbReference>
<dbReference type="InterPro" id="IPR008881">
    <property type="entry name" value="Trigger_fac_ribosome-bd_bac"/>
</dbReference>
<dbReference type="InterPro" id="IPR036611">
    <property type="entry name" value="Trigger_fac_ribosome-bd_sf"/>
</dbReference>
<dbReference type="InterPro" id="IPR027304">
    <property type="entry name" value="Trigger_fact/SurA_dom_sf"/>
</dbReference>
<dbReference type="NCBIfam" id="TIGR00115">
    <property type="entry name" value="tig"/>
    <property type="match status" value="1"/>
</dbReference>
<dbReference type="PANTHER" id="PTHR30560">
    <property type="entry name" value="TRIGGER FACTOR CHAPERONE AND PEPTIDYL-PROLYL CIS/TRANS ISOMERASE"/>
    <property type="match status" value="1"/>
</dbReference>
<dbReference type="PANTHER" id="PTHR30560:SF3">
    <property type="entry name" value="TRIGGER FACTOR-LIKE PROTEIN TIG, CHLOROPLASTIC"/>
    <property type="match status" value="1"/>
</dbReference>
<dbReference type="Pfam" id="PF00254">
    <property type="entry name" value="FKBP_C"/>
    <property type="match status" value="1"/>
</dbReference>
<dbReference type="Pfam" id="PF05698">
    <property type="entry name" value="Trigger_C"/>
    <property type="match status" value="1"/>
</dbReference>
<dbReference type="Pfam" id="PF05697">
    <property type="entry name" value="Trigger_N"/>
    <property type="match status" value="1"/>
</dbReference>
<dbReference type="PIRSF" id="PIRSF003095">
    <property type="entry name" value="Trigger_factor"/>
    <property type="match status" value="1"/>
</dbReference>
<dbReference type="SUPFAM" id="SSF54534">
    <property type="entry name" value="FKBP-like"/>
    <property type="match status" value="1"/>
</dbReference>
<dbReference type="SUPFAM" id="SSF109998">
    <property type="entry name" value="Triger factor/SurA peptide-binding domain-like"/>
    <property type="match status" value="1"/>
</dbReference>
<dbReference type="SUPFAM" id="SSF102735">
    <property type="entry name" value="Trigger factor ribosome-binding domain"/>
    <property type="match status" value="1"/>
</dbReference>
<dbReference type="PROSITE" id="PS50059">
    <property type="entry name" value="FKBP_PPIASE"/>
    <property type="match status" value="1"/>
</dbReference>
<gene>
    <name evidence="1" type="primary">tig</name>
    <name type="ordered locus">YpAngola_A3055</name>
</gene>
<proteinExistence type="inferred from homology"/>
<organism>
    <name type="scientific">Yersinia pestis bv. Antiqua (strain Angola)</name>
    <dbReference type="NCBI Taxonomy" id="349746"/>
    <lineage>
        <taxon>Bacteria</taxon>
        <taxon>Pseudomonadati</taxon>
        <taxon>Pseudomonadota</taxon>
        <taxon>Gammaproteobacteria</taxon>
        <taxon>Enterobacterales</taxon>
        <taxon>Yersiniaceae</taxon>
        <taxon>Yersinia</taxon>
    </lineage>
</organism>
<accession>A9QZQ4</accession>
<name>TIG_YERPG</name>
<evidence type="ECO:0000255" key="1">
    <source>
        <dbReference type="HAMAP-Rule" id="MF_00303"/>
    </source>
</evidence>
<sequence>MQVSVETTQGLGRRVTITVAADSIEKAVKSELVKAAKNVRIDGFRKGHVPMNIVEQRYGASVRQDVLGDLMQRNFVDAIIKEKINPAGAPNYVPGEYKQGEDFTYSVEFEVYPEVELKDLESIEVEKPVVEVNDADVDTMLETLRKQQATWKETDAAATAEDRATLDFTGSIDGEEFEGGKATDFVLAMGQGRMIPGFEEGVIGHKAGEEFTIDVNFPEDYHAENLKGKSAKFAIVLKKVEVRELPELTEEFIKRFGVADGSLAGLRAEVRKNMERELKGAVRNRVKTQAIDGLVSANNIDVPTALVDGEIDVLRRQAAQRFGGNEKQAAELPRELFEEQAKRRVVVGLLLGEVISQHELKADEDRVKALIEEMASAYEDPQEVIEFYSKNKELMNNMRNVALEEQAVETLLAKAKVTEKPTTFSELMNQTTAA</sequence>
<keyword id="KW-0131">Cell cycle</keyword>
<keyword id="KW-0132">Cell division</keyword>
<keyword id="KW-0143">Chaperone</keyword>
<keyword id="KW-0963">Cytoplasm</keyword>
<keyword id="KW-0413">Isomerase</keyword>
<keyword id="KW-0697">Rotamase</keyword>
<comment type="function">
    <text evidence="1">Involved in protein export. Acts as a chaperone by maintaining the newly synthesized protein in an open conformation. Functions as a peptidyl-prolyl cis-trans isomerase.</text>
</comment>
<comment type="catalytic activity">
    <reaction evidence="1">
        <text>[protein]-peptidylproline (omega=180) = [protein]-peptidylproline (omega=0)</text>
        <dbReference type="Rhea" id="RHEA:16237"/>
        <dbReference type="Rhea" id="RHEA-COMP:10747"/>
        <dbReference type="Rhea" id="RHEA-COMP:10748"/>
        <dbReference type="ChEBI" id="CHEBI:83833"/>
        <dbReference type="ChEBI" id="CHEBI:83834"/>
        <dbReference type="EC" id="5.2.1.8"/>
    </reaction>
</comment>
<comment type="subcellular location">
    <subcellularLocation>
        <location>Cytoplasm</location>
    </subcellularLocation>
    <text evidence="1">About half TF is bound to the ribosome near the polypeptide exit tunnel while the other half is free in the cytoplasm.</text>
</comment>
<comment type="domain">
    <text evidence="1">Consists of 3 domains; the N-terminus binds the ribosome, the middle domain has PPIase activity, while the C-terminus has intrinsic chaperone activity on its own.</text>
</comment>
<comment type="similarity">
    <text evidence="1">Belongs to the FKBP-type PPIase family. Tig subfamily.</text>
</comment>